<dbReference type="EC" id="7.1.2.2" evidence="1"/>
<dbReference type="EMBL" id="CP001601">
    <property type="protein sequence ID" value="ACP32667.1"/>
    <property type="molecule type" value="Genomic_DNA"/>
</dbReference>
<dbReference type="RefSeq" id="WP_010187069.1">
    <property type="nucleotide sequence ID" value="NZ_ACLH01000006.1"/>
</dbReference>
<dbReference type="SMR" id="C3PFR3"/>
<dbReference type="STRING" id="548476.cauri_1072"/>
<dbReference type="GeneID" id="31923694"/>
<dbReference type="KEGG" id="car:cauri_1072"/>
<dbReference type="eggNOG" id="COG0056">
    <property type="taxonomic scope" value="Bacteria"/>
</dbReference>
<dbReference type="HOGENOM" id="CLU_010091_2_1_11"/>
<dbReference type="OrthoDB" id="9803053at2"/>
<dbReference type="Proteomes" id="UP000002077">
    <property type="component" value="Chromosome"/>
</dbReference>
<dbReference type="GO" id="GO:0005886">
    <property type="term" value="C:plasma membrane"/>
    <property type="evidence" value="ECO:0007669"/>
    <property type="project" value="UniProtKB-SubCell"/>
</dbReference>
<dbReference type="GO" id="GO:0045259">
    <property type="term" value="C:proton-transporting ATP synthase complex"/>
    <property type="evidence" value="ECO:0007669"/>
    <property type="project" value="UniProtKB-KW"/>
</dbReference>
<dbReference type="GO" id="GO:0043531">
    <property type="term" value="F:ADP binding"/>
    <property type="evidence" value="ECO:0007669"/>
    <property type="project" value="TreeGrafter"/>
</dbReference>
<dbReference type="GO" id="GO:0005524">
    <property type="term" value="F:ATP binding"/>
    <property type="evidence" value="ECO:0007669"/>
    <property type="project" value="UniProtKB-UniRule"/>
</dbReference>
<dbReference type="GO" id="GO:0046933">
    <property type="term" value="F:proton-transporting ATP synthase activity, rotational mechanism"/>
    <property type="evidence" value="ECO:0007669"/>
    <property type="project" value="UniProtKB-UniRule"/>
</dbReference>
<dbReference type="CDD" id="cd18113">
    <property type="entry name" value="ATP-synt_F1_alpha_C"/>
    <property type="match status" value="1"/>
</dbReference>
<dbReference type="CDD" id="cd18116">
    <property type="entry name" value="ATP-synt_F1_alpha_N"/>
    <property type="match status" value="1"/>
</dbReference>
<dbReference type="CDD" id="cd01132">
    <property type="entry name" value="F1-ATPase_alpha_CD"/>
    <property type="match status" value="1"/>
</dbReference>
<dbReference type="FunFam" id="1.20.150.20:FF:000001">
    <property type="entry name" value="ATP synthase subunit alpha"/>
    <property type="match status" value="1"/>
</dbReference>
<dbReference type="FunFam" id="3.40.50.300:FF:000002">
    <property type="entry name" value="ATP synthase subunit alpha"/>
    <property type="match status" value="1"/>
</dbReference>
<dbReference type="Gene3D" id="2.40.30.20">
    <property type="match status" value="1"/>
</dbReference>
<dbReference type="Gene3D" id="1.20.150.20">
    <property type="entry name" value="ATP synthase alpha/beta chain, C-terminal domain"/>
    <property type="match status" value="1"/>
</dbReference>
<dbReference type="Gene3D" id="3.40.50.300">
    <property type="entry name" value="P-loop containing nucleotide triphosphate hydrolases"/>
    <property type="match status" value="1"/>
</dbReference>
<dbReference type="HAMAP" id="MF_01346">
    <property type="entry name" value="ATP_synth_alpha_bact"/>
    <property type="match status" value="1"/>
</dbReference>
<dbReference type="InterPro" id="IPR023366">
    <property type="entry name" value="ATP_synth_asu-like_sf"/>
</dbReference>
<dbReference type="InterPro" id="IPR000793">
    <property type="entry name" value="ATP_synth_asu_C"/>
</dbReference>
<dbReference type="InterPro" id="IPR038376">
    <property type="entry name" value="ATP_synth_asu_C_sf"/>
</dbReference>
<dbReference type="InterPro" id="IPR033732">
    <property type="entry name" value="ATP_synth_F1_a_nt-bd_dom"/>
</dbReference>
<dbReference type="InterPro" id="IPR005294">
    <property type="entry name" value="ATP_synth_F1_asu"/>
</dbReference>
<dbReference type="InterPro" id="IPR020003">
    <property type="entry name" value="ATPase_a/bsu_AS"/>
</dbReference>
<dbReference type="InterPro" id="IPR004100">
    <property type="entry name" value="ATPase_F1/V1/A1_a/bsu_N"/>
</dbReference>
<dbReference type="InterPro" id="IPR036121">
    <property type="entry name" value="ATPase_F1/V1/A1_a/bsu_N_sf"/>
</dbReference>
<dbReference type="InterPro" id="IPR000194">
    <property type="entry name" value="ATPase_F1/V1/A1_a/bsu_nucl-bd"/>
</dbReference>
<dbReference type="InterPro" id="IPR027417">
    <property type="entry name" value="P-loop_NTPase"/>
</dbReference>
<dbReference type="NCBIfam" id="TIGR00962">
    <property type="entry name" value="atpA"/>
    <property type="match status" value="1"/>
</dbReference>
<dbReference type="NCBIfam" id="NF009884">
    <property type="entry name" value="PRK13343.1"/>
    <property type="match status" value="1"/>
</dbReference>
<dbReference type="PANTHER" id="PTHR48082">
    <property type="entry name" value="ATP SYNTHASE SUBUNIT ALPHA, MITOCHONDRIAL"/>
    <property type="match status" value="1"/>
</dbReference>
<dbReference type="PANTHER" id="PTHR48082:SF2">
    <property type="entry name" value="ATP SYNTHASE SUBUNIT ALPHA, MITOCHONDRIAL"/>
    <property type="match status" value="1"/>
</dbReference>
<dbReference type="Pfam" id="PF00006">
    <property type="entry name" value="ATP-synt_ab"/>
    <property type="match status" value="1"/>
</dbReference>
<dbReference type="Pfam" id="PF00306">
    <property type="entry name" value="ATP-synt_ab_C"/>
    <property type="match status" value="1"/>
</dbReference>
<dbReference type="Pfam" id="PF02874">
    <property type="entry name" value="ATP-synt_ab_N"/>
    <property type="match status" value="1"/>
</dbReference>
<dbReference type="SUPFAM" id="SSF47917">
    <property type="entry name" value="C-terminal domain of alpha and beta subunits of F1 ATP synthase"/>
    <property type="match status" value="1"/>
</dbReference>
<dbReference type="SUPFAM" id="SSF50615">
    <property type="entry name" value="N-terminal domain of alpha and beta subunits of F1 ATP synthase"/>
    <property type="match status" value="1"/>
</dbReference>
<dbReference type="SUPFAM" id="SSF52540">
    <property type="entry name" value="P-loop containing nucleoside triphosphate hydrolases"/>
    <property type="match status" value="1"/>
</dbReference>
<dbReference type="PROSITE" id="PS00152">
    <property type="entry name" value="ATPASE_ALPHA_BETA"/>
    <property type="match status" value="1"/>
</dbReference>
<name>ATPA_CORA7</name>
<sequence>MAELTISSDEIRSAIANYTSSYSAEASREEVGVVISAADGIAQVSGLPSVMANELLEFPGGVIGVAQNLDTNSIGVVVLGNFESLKEGDEVKRTGEVLSIPVGEEFLGRVINPLGQPIDGMGPITAEEDRVLELQAPSVLQRQPVEEPMQTGIKAIDAMTPIGRGQRQLIIGDRKTGKTAVCIDTILNQKANWESGDKNKQVRCIYVAIGQKGSTIAGVRHTLEQHGALEYTTIVAAPASDAAGFKWLAPFSGAALGQHWMYQGNHVLIIYDDLTKQAEAYRAISLLLRRPPGREAYPGDVFYLHSRLLERAAKLSDDMGAGSMTALPIIETKANDVSAFIPTNVISITDGQVFLESDLFNQGVRPAINVGVSVSRVGGAAQTKGMKKVAGNLRLELAAYRDLQAFAAFASDLDPASKAQLERGERLVELLKQSESSPQPVEYQMVSIFLADQGIFDVVPVEDVRRFEKELHDHLNSATPQVFEQIQGGTALTDESKDALVAAAKDFTPSFRTTEGNNLGTEAPVDPLAADDVNKTELNVSRKTAK</sequence>
<reference key="1">
    <citation type="journal article" date="2010" name="BMC Genomics">
        <title>Complete genome sequence and lifestyle of black-pigmented Corynebacterium aurimucosum ATCC 700975 (formerly C. nigricans CN-1) isolated from a vaginal swab of a woman with spontaneous abortion.</title>
        <authorList>
            <person name="Trost E."/>
            <person name="Gotker S."/>
            <person name="Schneider J."/>
            <person name="Schneiker-Bekel S."/>
            <person name="Szczepanowski R."/>
            <person name="Tilker A."/>
            <person name="Viehoever P."/>
            <person name="Arnold W."/>
            <person name="Bekel T."/>
            <person name="Blom J."/>
            <person name="Gartemann K.H."/>
            <person name="Linke B."/>
            <person name="Goesmann A."/>
            <person name="Puhler A."/>
            <person name="Shukla S.K."/>
            <person name="Tauch A."/>
        </authorList>
    </citation>
    <scope>NUCLEOTIDE SEQUENCE [LARGE SCALE GENOMIC DNA]</scope>
    <source>
        <strain>ATCC 700975 / DSM 44827 / CIP 107346 / CN-1</strain>
    </source>
</reference>
<proteinExistence type="inferred from homology"/>
<accession>C3PFR3</accession>
<gene>
    <name evidence="1" type="primary">atpA</name>
    <name type="ordered locus">cauri_1072</name>
</gene>
<evidence type="ECO:0000255" key="1">
    <source>
        <dbReference type="HAMAP-Rule" id="MF_01346"/>
    </source>
</evidence>
<evidence type="ECO:0000256" key="2">
    <source>
        <dbReference type="SAM" id="MobiDB-lite"/>
    </source>
</evidence>
<comment type="function">
    <text evidence="1">Produces ATP from ADP in the presence of a proton gradient across the membrane. The alpha chain is a regulatory subunit.</text>
</comment>
<comment type="catalytic activity">
    <reaction evidence="1">
        <text>ATP + H2O + 4 H(+)(in) = ADP + phosphate + 5 H(+)(out)</text>
        <dbReference type="Rhea" id="RHEA:57720"/>
        <dbReference type="ChEBI" id="CHEBI:15377"/>
        <dbReference type="ChEBI" id="CHEBI:15378"/>
        <dbReference type="ChEBI" id="CHEBI:30616"/>
        <dbReference type="ChEBI" id="CHEBI:43474"/>
        <dbReference type="ChEBI" id="CHEBI:456216"/>
        <dbReference type="EC" id="7.1.2.2"/>
    </reaction>
</comment>
<comment type="subunit">
    <text evidence="1">F-type ATPases have 2 components, CF(1) - the catalytic core - and CF(0) - the membrane proton channel. CF(1) has five subunits: alpha(3), beta(3), gamma(1), delta(1), epsilon(1). CF(0) has three main subunits: a(1), b(2) and c(9-12). The alpha and beta chains form an alternating ring which encloses part of the gamma chain. CF(1) is attached to CF(0) by a central stalk formed by the gamma and epsilon chains, while a peripheral stalk is formed by the delta and b chains.</text>
</comment>
<comment type="subcellular location">
    <subcellularLocation>
        <location evidence="1">Cell membrane</location>
        <topology evidence="1">Peripheral membrane protein</topology>
    </subcellularLocation>
</comment>
<comment type="similarity">
    <text evidence="1">Belongs to the ATPase alpha/beta chains family.</text>
</comment>
<keyword id="KW-0066">ATP synthesis</keyword>
<keyword id="KW-0067">ATP-binding</keyword>
<keyword id="KW-1003">Cell membrane</keyword>
<keyword id="KW-0139">CF(1)</keyword>
<keyword id="KW-0375">Hydrogen ion transport</keyword>
<keyword id="KW-0406">Ion transport</keyword>
<keyword id="KW-0472">Membrane</keyword>
<keyword id="KW-0547">Nucleotide-binding</keyword>
<keyword id="KW-1185">Reference proteome</keyword>
<keyword id="KW-1278">Translocase</keyword>
<keyword id="KW-0813">Transport</keyword>
<feature type="chain" id="PRO_1000166532" description="ATP synthase subunit alpha">
    <location>
        <begin position="1"/>
        <end position="546"/>
    </location>
</feature>
<feature type="region of interest" description="Disordered" evidence="2">
    <location>
        <begin position="511"/>
        <end position="546"/>
    </location>
</feature>
<feature type="compositionally biased region" description="Polar residues" evidence="2">
    <location>
        <begin position="511"/>
        <end position="520"/>
    </location>
</feature>
<feature type="compositionally biased region" description="Polar residues" evidence="2">
    <location>
        <begin position="536"/>
        <end position="546"/>
    </location>
</feature>
<feature type="binding site" evidence="1">
    <location>
        <begin position="172"/>
        <end position="179"/>
    </location>
    <ligand>
        <name>ATP</name>
        <dbReference type="ChEBI" id="CHEBI:30616"/>
    </ligand>
</feature>
<feature type="site" description="Required for activity" evidence="1">
    <location>
        <position position="373"/>
    </location>
</feature>
<organism>
    <name type="scientific">Corynebacterium aurimucosum (strain ATCC 700975 / DSM 44827 / CIP 107346 / CN-1)</name>
    <name type="common">Corynebacterium nigricans</name>
    <dbReference type="NCBI Taxonomy" id="548476"/>
    <lineage>
        <taxon>Bacteria</taxon>
        <taxon>Bacillati</taxon>
        <taxon>Actinomycetota</taxon>
        <taxon>Actinomycetes</taxon>
        <taxon>Mycobacteriales</taxon>
        <taxon>Corynebacteriaceae</taxon>
        <taxon>Corynebacterium</taxon>
    </lineage>
</organism>
<protein>
    <recommendedName>
        <fullName evidence="1">ATP synthase subunit alpha</fullName>
        <ecNumber evidence="1">7.1.2.2</ecNumber>
    </recommendedName>
    <alternativeName>
        <fullName evidence="1">ATP synthase F1 sector subunit alpha</fullName>
    </alternativeName>
    <alternativeName>
        <fullName evidence="1">F-ATPase subunit alpha</fullName>
    </alternativeName>
</protein>